<proteinExistence type="inferred from homology"/>
<accession>Q63Q07</accession>
<name>RS7_BURPS</name>
<sequence>MPRRREVPKREVLPDPKYGNVDVAKFMNMLMLSGKKSVAERIVYGAFEQIQTKGGKDPLEVFTVALNNVKPVVEVKSRRVGGANYQVPVEVRPSRRMALAMRWLREAAKKRSEKSMALRLAGELSEAAEGRGGAMKKRDEVHRMAEANRAFSHFRF</sequence>
<feature type="chain" id="PRO_0000124237" description="Small ribosomal subunit protein uS7">
    <location>
        <begin position="1"/>
        <end position="156"/>
    </location>
</feature>
<keyword id="KW-1185">Reference proteome</keyword>
<keyword id="KW-0687">Ribonucleoprotein</keyword>
<keyword id="KW-0689">Ribosomal protein</keyword>
<keyword id="KW-0694">RNA-binding</keyword>
<keyword id="KW-0699">rRNA-binding</keyword>
<keyword id="KW-0820">tRNA-binding</keyword>
<organism>
    <name type="scientific">Burkholderia pseudomallei (strain K96243)</name>
    <dbReference type="NCBI Taxonomy" id="272560"/>
    <lineage>
        <taxon>Bacteria</taxon>
        <taxon>Pseudomonadati</taxon>
        <taxon>Pseudomonadota</taxon>
        <taxon>Betaproteobacteria</taxon>
        <taxon>Burkholderiales</taxon>
        <taxon>Burkholderiaceae</taxon>
        <taxon>Burkholderia</taxon>
        <taxon>pseudomallei group</taxon>
    </lineage>
</organism>
<evidence type="ECO:0000255" key="1">
    <source>
        <dbReference type="HAMAP-Rule" id="MF_00480"/>
    </source>
</evidence>
<evidence type="ECO:0000305" key="2"/>
<reference key="1">
    <citation type="journal article" date="2004" name="Proc. Natl. Acad. Sci. U.S.A.">
        <title>Genomic plasticity of the causative agent of melioidosis, Burkholderia pseudomallei.</title>
        <authorList>
            <person name="Holden M.T.G."/>
            <person name="Titball R.W."/>
            <person name="Peacock S.J."/>
            <person name="Cerdeno-Tarraga A.-M."/>
            <person name="Atkins T."/>
            <person name="Crossman L.C."/>
            <person name="Pitt T."/>
            <person name="Churcher C."/>
            <person name="Mungall K.L."/>
            <person name="Bentley S.D."/>
            <person name="Sebaihia M."/>
            <person name="Thomson N.R."/>
            <person name="Bason N."/>
            <person name="Beacham I.R."/>
            <person name="Brooks K."/>
            <person name="Brown K.A."/>
            <person name="Brown N.F."/>
            <person name="Challis G.L."/>
            <person name="Cherevach I."/>
            <person name="Chillingworth T."/>
            <person name="Cronin A."/>
            <person name="Crossett B."/>
            <person name="Davis P."/>
            <person name="DeShazer D."/>
            <person name="Feltwell T."/>
            <person name="Fraser A."/>
            <person name="Hance Z."/>
            <person name="Hauser H."/>
            <person name="Holroyd S."/>
            <person name="Jagels K."/>
            <person name="Keith K.E."/>
            <person name="Maddison M."/>
            <person name="Moule S."/>
            <person name="Price C."/>
            <person name="Quail M.A."/>
            <person name="Rabbinowitsch E."/>
            <person name="Rutherford K."/>
            <person name="Sanders M."/>
            <person name="Simmonds M."/>
            <person name="Songsivilai S."/>
            <person name="Stevens K."/>
            <person name="Tumapa S."/>
            <person name="Vesaratchavest M."/>
            <person name="Whitehead S."/>
            <person name="Yeats C."/>
            <person name="Barrell B.G."/>
            <person name="Oyston P.C.F."/>
            <person name="Parkhill J."/>
        </authorList>
    </citation>
    <scope>NUCLEOTIDE SEQUENCE [LARGE SCALE GENOMIC DNA]</scope>
    <source>
        <strain>K96243</strain>
    </source>
</reference>
<gene>
    <name evidence="1" type="primary">rpsG</name>
    <name type="ordered locus">BPSL3217</name>
</gene>
<comment type="function">
    <text evidence="1">One of the primary rRNA binding proteins, it binds directly to 16S rRNA where it nucleates assembly of the head domain of the 30S subunit. Is located at the subunit interface close to the decoding center, probably blocks exit of the E-site tRNA.</text>
</comment>
<comment type="subunit">
    <text evidence="1">Part of the 30S ribosomal subunit. Contacts proteins S9 and S11.</text>
</comment>
<comment type="similarity">
    <text evidence="1">Belongs to the universal ribosomal protein uS7 family.</text>
</comment>
<dbReference type="EMBL" id="BX571965">
    <property type="protein sequence ID" value="CAH37228.1"/>
    <property type="molecule type" value="Genomic_DNA"/>
</dbReference>
<dbReference type="RefSeq" id="WP_004198359.1">
    <property type="nucleotide sequence ID" value="NZ_CP009538.1"/>
</dbReference>
<dbReference type="RefSeq" id="YP_109811.1">
    <property type="nucleotide sequence ID" value="NC_006350.1"/>
</dbReference>
<dbReference type="SMR" id="Q63Q07"/>
<dbReference type="STRING" id="272560.BPSL3217"/>
<dbReference type="GeneID" id="93171021"/>
<dbReference type="KEGG" id="bps:BPSL3217"/>
<dbReference type="PATRIC" id="fig|272560.51.peg.2021"/>
<dbReference type="eggNOG" id="COG0049">
    <property type="taxonomic scope" value="Bacteria"/>
</dbReference>
<dbReference type="PRO" id="PR:Q63Q07"/>
<dbReference type="Proteomes" id="UP000000605">
    <property type="component" value="Chromosome 1"/>
</dbReference>
<dbReference type="GO" id="GO:0015935">
    <property type="term" value="C:small ribosomal subunit"/>
    <property type="evidence" value="ECO:0007669"/>
    <property type="project" value="InterPro"/>
</dbReference>
<dbReference type="GO" id="GO:0019843">
    <property type="term" value="F:rRNA binding"/>
    <property type="evidence" value="ECO:0007669"/>
    <property type="project" value="UniProtKB-UniRule"/>
</dbReference>
<dbReference type="GO" id="GO:0003735">
    <property type="term" value="F:structural constituent of ribosome"/>
    <property type="evidence" value="ECO:0007669"/>
    <property type="project" value="InterPro"/>
</dbReference>
<dbReference type="GO" id="GO:0000049">
    <property type="term" value="F:tRNA binding"/>
    <property type="evidence" value="ECO:0007669"/>
    <property type="project" value="UniProtKB-UniRule"/>
</dbReference>
<dbReference type="GO" id="GO:0006412">
    <property type="term" value="P:translation"/>
    <property type="evidence" value="ECO:0007669"/>
    <property type="project" value="UniProtKB-UniRule"/>
</dbReference>
<dbReference type="CDD" id="cd14869">
    <property type="entry name" value="uS7_Bacteria"/>
    <property type="match status" value="1"/>
</dbReference>
<dbReference type="FunFam" id="1.10.455.10:FF:000001">
    <property type="entry name" value="30S ribosomal protein S7"/>
    <property type="match status" value="1"/>
</dbReference>
<dbReference type="Gene3D" id="1.10.455.10">
    <property type="entry name" value="Ribosomal protein S7 domain"/>
    <property type="match status" value="1"/>
</dbReference>
<dbReference type="HAMAP" id="MF_00480_B">
    <property type="entry name" value="Ribosomal_uS7_B"/>
    <property type="match status" value="1"/>
</dbReference>
<dbReference type="InterPro" id="IPR000235">
    <property type="entry name" value="Ribosomal_uS7"/>
</dbReference>
<dbReference type="InterPro" id="IPR005717">
    <property type="entry name" value="Ribosomal_uS7_bac/org-type"/>
</dbReference>
<dbReference type="InterPro" id="IPR020606">
    <property type="entry name" value="Ribosomal_uS7_CS"/>
</dbReference>
<dbReference type="InterPro" id="IPR023798">
    <property type="entry name" value="Ribosomal_uS7_dom"/>
</dbReference>
<dbReference type="InterPro" id="IPR036823">
    <property type="entry name" value="Ribosomal_uS7_dom_sf"/>
</dbReference>
<dbReference type="NCBIfam" id="TIGR01029">
    <property type="entry name" value="rpsG_bact"/>
    <property type="match status" value="1"/>
</dbReference>
<dbReference type="PANTHER" id="PTHR11205">
    <property type="entry name" value="RIBOSOMAL PROTEIN S7"/>
    <property type="match status" value="1"/>
</dbReference>
<dbReference type="Pfam" id="PF00177">
    <property type="entry name" value="Ribosomal_S7"/>
    <property type="match status" value="1"/>
</dbReference>
<dbReference type="PIRSF" id="PIRSF002122">
    <property type="entry name" value="RPS7p_RPS7a_RPS5e_RPS7o"/>
    <property type="match status" value="1"/>
</dbReference>
<dbReference type="SUPFAM" id="SSF47973">
    <property type="entry name" value="Ribosomal protein S7"/>
    <property type="match status" value="1"/>
</dbReference>
<dbReference type="PROSITE" id="PS00052">
    <property type="entry name" value="RIBOSOMAL_S7"/>
    <property type="match status" value="1"/>
</dbReference>
<protein>
    <recommendedName>
        <fullName evidence="1">Small ribosomal subunit protein uS7</fullName>
    </recommendedName>
    <alternativeName>
        <fullName evidence="2">30S ribosomal protein S7</fullName>
    </alternativeName>
</protein>